<sequence>MSQLYALNGQPLAGKSDDLANKLAAFGLSQPNHSSLSEQQSTNSLLHGSGAFNKPPLSRNSTTNPLNLLYTQTQQPARSTTPFLLNPVGSSPGKLPVPSRNNSYLQGTAESNSGNFANNSISNNCWNSAYNSNSFEGTGSSPNFPPQNQFLSDSRSSIATLNAIPSLDQSVLLNPNLRARTPSLVPEHYFDDTDKSVHSKSSSGSNSLSEASNDDLESSIIQIVGGLPDDFDDRELSGIFTFCEGYDFSKIESENGHRKAIVYFRNAIAALKAKNMLNASSTNNFTIIQRDVVRQQENEYHKGIPPLTTPSLYSQRLSNNYDSTTPGFPRFSPANFDSVINKDVTSESRMSTSYPAVLEAFKSFNPIKAPKAEYLNQSRASMGNPSPSNWNNRLLQPSSKEQAVYSFQTQKNSKGLQFTSNELTNPTAKYSQLPNNIANIGESNSLSNQPNNFAQTSFDYQPNHPNAISPKAKFSLPSRPSYHKDNSFISKQAIDKSNPFEEALRLERTSPVKELPAIRPRTIPLNGVAPYESELRPPPKWKPMPDLKVVRSRPSLKQRPLRSAEYVRVCELKCLQEEEFDNKVLLEQVESNVQTDHNSPCNTIYVGNLSNPDQEKKLRLAFSKEKGYRRLCFKIKGNSPMCFVEFEEVCHAAKAMEKMQGAALDDKIKGGIRLSYSKNPLGVRSTENLSTTASLFQQHGPPKKSTDCYSAKASAAVERKYHFQNMTPKPNGTNSVTTLNRTQTHSSEVNDLFDIFEFPSK</sequence>
<keyword id="KW-0507">mRNA processing</keyword>
<keyword id="KW-0508">mRNA splicing</keyword>
<keyword id="KW-1185">Reference proteome</keyword>
<keyword id="KW-0677">Repeat</keyword>
<keyword id="KW-0694">RNA-binding</keyword>
<proteinExistence type="predicted"/>
<name>MDE7_SCHPO</name>
<gene>
    <name type="primary">mde7</name>
    <name type="ORF">SPCC320.07c</name>
</gene>
<reference key="1">
    <citation type="journal article" date="2002" name="Nature">
        <title>The genome sequence of Schizosaccharomyces pombe.</title>
        <authorList>
            <person name="Wood V."/>
            <person name="Gwilliam R."/>
            <person name="Rajandream M.A."/>
            <person name="Lyne M.H."/>
            <person name="Lyne R."/>
            <person name="Stewart A."/>
            <person name="Sgouros J.G."/>
            <person name="Peat N."/>
            <person name="Hayles J."/>
            <person name="Baker S.G."/>
            <person name="Basham D."/>
            <person name="Bowman S."/>
            <person name="Brooks K."/>
            <person name="Brown D."/>
            <person name="Brown S."/>
            <person name="Chillingworth T."/>
            <person name="Churcher C.M."/>
            <person name="Collins M."/>
            <person name="Connor R."/>
            <person name="Cronin A."/>
            <person name="Davis P."/>
            <person name="Feltwell T."/>
            <person name="Fraser A."/>
            <person name="Gentles S."/>
            <person name="Goble A."/>
            <person name="Hamlin N."/>
            <person name="Harris D.E."/>
            <person name="Hidalgo J."/>
            <person name="Hodgson G."/>
            <person name="Holroyd S."/>
            <person name="Hornsby T."/>
            <person name="Howarth S."/>
            <person name="Huckle E.J."/>
            <person name="Hunt S."/>
            <person name="Jagels K."/>
            <person name="James K.D."/>
            <person name="Jones L."/>
            <person name="Jones M."/>
            <person name="Leather S."/>
            <person name="McDonald S."/>
            <person name="McLean J."/>
            <person name="Mooney P."/>
            <person name="Moule S."/>
            <person name="Mungall K.L."/>
            <person name="Murphy L.D."/>
            <person name="Niblett D."/>
            <person name="Odell C."/>
            <person name="Oliver K."/>
            <person name="O'Neil S."/>
            <person name="Pearson D."/>
            <person name="Quail M.A."/>
            <person name="Rabbinowitsch E."/>
            <person name="Rutherford K.M."/>
            <person name="Rutter S."/>
            <person name="Saunders D."/>
            <person name="Seeger K."/>
            <person name="Sharp S."/>
            <person name="Skelton J."/>
            <person name="Simmonds M.N."/>
            <person name="Squares R."/>
            <person name="Squares S."/>
            <person name="Stevens K."/>
            <person name="Taylor K."/>
            <person name="Taylor R.G."/>
            <person name="Tivey A."/>
            <person name="Walsh S.V."/>
            <person name="Warren T."/>
            <person name="Whitehead S."/>
            <person name="Woodward J.R."/>
            <person name="Volckaert G."/>
            <person name="Aert R."/>
            <person name="Robben J."/>
            <person name="Grymonprez B."/>
            <person name="Weltjens I."/>
            <person name="Vanstreels E."/>
            <person name="Rieger M."/>
            <person name="Schaefer M."/>
            <person name="Mueller-Auer S."/>
            <person name="Gabel C."/>
            <person name="Fuchs M."/>
            <person name="Duesterhoeft A."/>
            <person name="Fritzc C."/>
            <person name="Holzer E."/>
            <person name="Moestl D."/>
            <person name="Hilbert H."/>
            <person name="Borzym K."/>
            <person name="Langer I."/>
            <person name="Beck A."/>
            <person name="Lehrach H."/>
            <person name="Reinhardt R."/>
            <person name="Pohl T.M."/>
            <person name="Eger P."/>
            <person name="Zimmermann W."/>
            <person name="Wedler H."/>
            <person name="Wambutt R."/>
            <person name="Purnelle B."/>
            <person name="Goffeau A."/>
            <person name="Cadieu E."/>
            <person name="Dreano S."/>
            <person name="Gloux S."/>
            <person name="Lelaure V."/>
            <person name="Mottier S."/>
            <person name="Galibert F."/>
            <person name="Aves S.J."/>
            <person name="Xiang Z."/>
            <person name="Hunt C."/>
            <person name="Moore K."/>
            <person name="Hurst S.M."/>
            <person name="Lucas M."/>
            <person name="Rochet M."/>
            <person name="Gaillardin C."/>
            <person name="Tallada V.A."/>
            <person name="Garzon A."/>
            <person name="Thode G."/>
            <person name="Daga R.R."/>
            <person name="Cruzado L."/>
            <person name="Jimenez J."/>
            <person name="Sanchez M."/>
            <person name="del Rey F."/>
            <person name="Benito J."/>
            <person name="Dominguez A."/>
            <person name="Revuelta J.L."/>
            <person name="Moreno S."/>
            <person name="Armstrong J."/>
            <person name="Forsburg S.L."/>
            <person name="Cerutti L."/>
            <person name="Lowe T."/>
            <person name="McCombie W.R."/>
            <person name="Paulsen I."/>
            <person name="Potashkin J."/>
            <person name="Shpakovski G.V."/>
            <person name="Ussery D."/>
            <person name="Barrell B.G."/>
            <person name="Nurse P."/>
        </authorList>
    </citation>
    <scope>NUCLEOTIDE SEQUENCE [LARGE SCALE GENOMIC DNA]</scope>
    <source>
        <strain>972 / ATCC 24843</strain>
    </source>
</reference>
<accession>O59784</accession>
<dbReference type="EMBL" id="CU329672">
    <property type="protein sequence ID" value="CAA18309.1"/>
    <property type="molecule type" value="Genomic_DNA"/>
</dbReference>
<dbReference type="PIR" id="T41304">
    <property type="entry name" value="T41304"/>
</dbReference>
<dbReference type="RefSeq" id="NP_587722.1">
    <property type="nucleotide sequence ID" value="NM_001022717.1"/>
</dbReference>
<dbReference type="SMR" id="O59784"/>
<dbReference type="BioGRID" id="275288">
    <property type="interactions" value="10"/>
</dbReference>
<dbReference type="FunCoup" id="O59784">
    <property type="interactions" value="1"/>
</dbReference>
<dbReference type="STRING" id="284812.O59784"/>
<dbReference type="PaxDb" id="4896-SPCC320.07c.1"/>
<dbReference type="EnsemblFungi" id="SPCC320.07c.1">
    <property type="protein sequence ID" value="SPCC320.07c.1:pep"/>
    <property type="gene ID" value="SPCC320.07c"/>
</dbReference>
<dbReference type="GeneID" id="2538704"/>
<dbReference type="KEGG" id="spo:2538704"/>
<dbReference type="PomBase" id="SPCC320.07c">
    <property type="gene designation" value="mde7"/>
</dbReference>
<dbReference type="VEuPathDB" id="FungiDB:SPCC320.07c"/>
<dbReference type="eggNOG" id="KOG0118">
    <property type="taxonomic scope" value="Eukaryota"/>
</dbReference>
<dbReference type="HOGENOM" id="CLU_373451_0_0_1"/>
<dbReference type="InParanoid" id="O59784"/>
<dbReference type="OMA" id="ANPAYDI"/>
<dbReference type="PRO" id="PR:O59784"/>
<dbReference type="Proteomes" id="UP000002485">
    <property type="component" value="Chromosome III"/>
</dbReference>
<dbReference type="GO" id="GO:0005737">
    <property type="term" value="C:cytoplasm"/>
    <property type="evidence" value="ECO:0007005"/>
    <property type="project" value="PomBase"/>
</dbReference>
<dbReference type="GO" id="GO:0003729">
    <property type="term" value="F:mRNA binding"/>
    <property type="evidence" value="ECO:0000318"/>
    <property type="project" value="GO_Central"/>
</dbReference>
<dbReference type="GO" id="GO:0006397">
    <property type="term" value="P:mRNA processing"/>
    <property type="evidence" value="ECO:0000266"/>
    <property type="project" value="PomBase"/>
</dbReference>
<dbReference type="GO" id="GO:0061013">
    <property type="term" value="P:regulation of mRNA catabolic process"/>
    <property type="evidence" value="ECO:0000266"/>
    <property type="project" value="PomBase"/>
</dbReference>
<dbReference type="GO" id="GO:0008380">
    <property type="term" value="P:RNA splicing"/>
    <property type="evidence" value="ECO:0007669"/>
    <property type="project" value="UniProtKB-KW"/>
</dbReference>
<dbReference type="CDD" id="cd12245">
    <property type="entry name" value="RRM_scw1_like"/>
    <property type="match status" value="1"/>
</dbReference>
<dbReference type="CDD" id="cd12419">
    <property type="entry name" value="RRM_Ssp2_like"/>
    <property type="match status" value="1"/>
</dbReference>
<dbReference type="Gene3D" id="3.30.70.330">
    <property type="match status" value="2"/>
</dbReference>
<dbReference type="InterPro" id="IPR012677">
    <property type="entry name" value="Nucleotide-bd_a/b_plait_sf"/>
</dbReference>
<dbReference type="InterPro" id="IPR035979">
    <property type="entry name" value="RBD_domain_sf"/>
</dbReference>
<dbReference type="InterPro" id="IPR000504">
    <property type="entry name" value="RRM_dom"/>
</dbReference>
<dbReference type="PANTHER" id="PTHR10501">
    <property type="entry name" value="U1 SMALL NUCLEAR RIBONUCLEOPROTEIN A/U2 SMALL NUCLEAR RIBONUCLEOPROTEIN B"/>
    <property type="match status" value="1"/>
</dbReference>
<dbReference type="Pfam" id="PF00076">
    <property type="entry name" value="RRM_1"/>
    <property type="match status" value="1"/>
</dbReference>
<dbReference type="SMART" id="SM00360">
    <property type="entry name" value="RRM"/>
    <property type="match status" value="2"/>
</dbReference>
<dbReference type="SUPFAM" id="SSF54928">
    <property type="entry name" value="RNA-binding domain, RBD"/>
    <property type="match status" value="2"/>
</dbReference>
<dbReference type="PROSITE" id="PS50102">
    <property type="entry name" value="RRM"/>
    <property type="match status" value="1"/>
</dbReference>
<feature type="chain" id="PRO_0000081625" description="RNA-binding protein mde7">
    <location>
        <begin position="1"/>
        <end position="761"/>
    </location>
</feature>
<feature type="domain" description="RRM 1" evidence="1">
    <location>
        <begin position="223"/>
        <end position="289"/>
    </location>
</feature>
<feature type="domain" description="RRM 2" evidence="1">
    <location>
        <begin position="602"/>
        <end position="679"/>
    </location>
</feature>
<feature type="region of interest" description="Disordered" evidence="2">
    <location>
        <begin position="31"/>
        <end position="110"/>
    </location>
</feature>
<feature type="region of interest" description="Disordered" evidence="2">
    <location>
        <begin position="188"/>
        <end position="213"/>
    </location>
</feature>
<feature type="region of interest" description="Disordered" evidence="2">
    <location>
        <begin position="442"/>
        <end position="468"/>
    </location>
</feature>
<feature type="compositionally biased region" description="Polar residues" evidence="2">
    <location>
        <begin position="31"/>
        <end position="46"/>
    </location>
</feature>
<feature type="compositionally biased region" description="Polar residues" evidence="2">
    <location>
        <begin position="58"/>
        <end position="83"/>
    </location>
</feature>
<feature type="compositionally biased region" description="Polar residues" evidence="2">
    <location>
        <begin position="99"/>
        <end position="110"/>
    </location>
</feature>
<feature type="compositionally biased region" description="Basic and acidic residues" evidence="2">
    <location>
        <begin position="188"/>
        <end position="197"/>
    </location>
</feature>
<feature type="compositionally biased region" description="Low complexity" evidence="2">
    <location>
        <begin position="199"/>
        <end position="211"/>
    </location>
</feature>
<feature type="compositionally biased region" description="Polar residues" evidence="2">
    <location>
        <begin position="442"/>
        <end position="466"/>
    </location>
</feature>
<organism>
    <name type="scientific">Schizosaccharomyces pombe (strain 972 / ATCC 24843)</name>
    <name type="common">Fission yeast</name>
    <dbReference type="NCBI Taxonomy" id="284812"/>
    <lineage>
        <taxon>Eukaryota</taxon>
        <taxon>Fungi</taxon>
        <taxon>Dikarya</taxon>
        <taxon>Ascomycota</taxon>
        <taxon>Taphrinomycotina</taxon>
        <taxon>Schizosaccharomycetes</taxon>
        <taxon>Schizosaccharomycetales</taxon>
        <taxon>Schizosaccharomycetaceae</taxon>
        <taxon>Schizosaccharomyces</taxon>
    </lineage>
</organism>
<comment type="miscellaneous">
    <text>Transcription is induced by mei4 transcription factor.</text>
</comment>
<protein>
    <recommendedName>
        <fullName>RNA-binding protein mde7</fullName>
    </recommendedName>
    <alternativeName>
        <fullName>Mei4-dependent protein 7</fullName>
    </alternativeName>
</protein>
<evidence type="ECO:0000255" key="1">
    <source>
        <dbReference type="PROSITE-ProRule" id="PRU00176"/>
    </source>
</evidence>
<evidence type="ECO:0000256" key="2">
    <source>
        <dbReference type="SAM" id="MobiDB-lite"/>
    </source>
</evidence>